<keyword id="KW-1185">Reference proteome</keyword>
<keyword id="KW-0732">Signal</keyword>
<accession>O28286</accession>
<reference key="1">
    <citation type="journal article" date="1997" name="Nature">
        <title>The complete genome sequence of the hyperthermophilic, sulphate-reducing archaeon Archaeoglobus fulgidus.</title>
        <authorList>
            <person name="Klenk H.-P."/>
            <person name="Clayton R.A."/>
            <person name="Tomb J.-F."/>
            <person name="White O."/>
            <person name="Nelson K.E."/>
            <person name="Ketchum K.A."/>
            <person name="Dodson R.J."/>
            <person name="Gwinn M.L."/>
            <person name="Hickey E.K."/>
            <person name="Peterson J.D."/>
            <person name="Richardson D.L."/>
            <person name="Kerlavage A.R."/>
            <person name="Graham D.E."/>
            <person name="Kyrpides N.C."/>
            <person name="Fleischmann R.D."/>
            <person name="Quackenbush J."/>
            <person name="Lee N.H."/>
            <person name="Sutton G.G."/>
            <person name="Gill S.R."/>
            <person name="Kirkness E.F."/>
            <person name="Dougherty B.A."/>
            <person name="McKenney K."/>
            <person name="Adams M.D."/>
            <person name="Loftus B.J."/>
            <person name="Peterson S.N."/>
            <person name="Reich C.I."/>
            <person name="McNeil L.K."/>
            <person name="Badger J.H."/>
            <person name="Glodek A."/>
            <person name="Zhou L."/>
            <person name="Overbeek R."/>
            <person name="Gocayne J.D."/>
            <person name="Weidman J.F."/>
            <person name="McDonald L.A."/>
            <person name="Utterback T.R."/>
            <person name="Cotton M.D."/>
            <person name="Spriggs T."/>
            <person name="Artiach P."/>
            <person name="Kaine B.P."/>
            <person name="Sykes S.M."/>
            <person name="Sadow P.W."/>
            <person name="D'Andrea K.P."/>
            <person name="Bowman C."/>
            <person name="Fujii C."/>
            <person name="Garland S.A."/>
            <person name="Mason T.M."/>
            <person name="Olsen G.J."/>
            <person name="Fraser C.M."/>
            <person name="Smith H.O."/>
            <person name="Woese C.R."/>
            <person name="Venter J.C."/>
        </authorList>
    </citation>
    <scope>NUCLEOTIDE SEQUENCE [LARGE SCALE GENOMIC DNA]</scope>
    <source>
        <strain>ATCC 49558 / DSM 4304 / JCM 9628 / NBRC 100126 / VC-16</strain>
    </source>
</reference>
<sequence>MLKKLIMGFFLLILLGIAGVAVMNYYYEANYDKELVAYDEGVFNDRVHFTSELLGPGTYRIIAGGTGIVEDIEIIDRSGNVVAKHEDTTNLLYGSSNSFVVRVNYAPPNPGEEYEATIEIYRYVEK</sequence>
<proteinExistence type="inferred from homology"/>
<evidence type="ECO:0000255" key="1"/>
<feature type="signal peptide" evidence="1">
    <location>
        <begin position="1"/>
        <end position="23"/>
    </location>
</feature>
<feature type="chain" id="PRO_0000013676" description="Uncharacterized protein AF_1993">
    <location>
        <begin position="24"/>
        <end position="126"/>
    </location>
</feature>
<name>Y1993_ARCFU</name>
<gene>
    <name type="ordered locus">AF_1993</name>
</gene>
<protein>
    <recommendedName>
        <fullName>Uncharacterized protein AF_1993</fullName>
    </recommendedName>
</protein>
<dbReference type="EMBL" id="AE000782">
    <property type="protein sequence ID" value="AAB89268.1"/>
    <property type="molecule type" value="Genomic_DNA"/>
</dbReference>
<dbReference type="PIR" id="H69498">
    <property type="entry name" value="H69498"/>
</dbReference>
<dbReference type="RefSeq" id="WP_010879485.1">
    <property type="nucleotide sequence ID" value="NC_000917.1"/>
</dbReference>
<dbReference type="STRING" id="224325.AF_1993"/>
<dbReference type="PaxDb" id="224325-AF_1993"/>
<dbReference type="EnsemblBacteria" id="AAB89268">
    <property type="protein sequence ID" value="AAB89268"/>
    <property type="gene ID" value="AF_1993"/>
</dbReference>
<dbReference type="KEGG" id="afu:AF_1993"/>
<dbReference type="eggNOG" id="arCOG06145">
    <property type="taxonomic scope" value="Archaea"/>
</dbReference>
<dbReference type="HOGENOM" id="CLU_159747_0_0_2"/>
<dbReference type="OrthoDB" id="91238at2157"/>
<dbReference type="Proteomes" id="UP000002199">
    <property type="component" value="Chromosome"/>
</dbReference>
<organism>
    <name type="scientific">Archaeoglobus fulgidus (strain ATCC 49558 / DSM 4304 / JCM 9628 / NBRC 100126 / VC-16)</name>
    <dbReference type="NCBI Taxonomy" id="224325"/>
    <lineage>
        <taxon>Archaea</taxon>
        <taxon>Methanobacteriati</taxon>
        <taxon>Methanobacteriota</taxon>
        <taxon>Archaeoglobi</taxon>
        <taxon>Archaeoglobales</taxon>
        <taxon>Archaeoglobaceae</taxon>
        <taxon>Archaeoglobus</taxon>
    </lineage>
</organism>